<sequence length="395" mass="43342">MAKEKFDRSKPHVNIGTIGHVDHGKTTLTAAITTVLAKKGYADAQAYDQIDGAPEERERGITISTAHVEYQTDSRHYAHVDCPGHADYVKNMITGAAQMDGAILVVSAADGPMPQTREHILLSRQVGVPYIVVFMNKCDMVDDEELLELVEMEIRDLLTEYEFPGDDIPVIKGSALKALQGEADWEAKIDELMEAVDSYIPTPERDTDKPFMMPVEDVFSITGRGTVATGRVERGQVKVGDEVEVIGIEEESKKVVVTGVEMFRKLLDYAEAGDNIGALLRGVAREDIQRGQVLAKPGSITPHTNFKAETYVLTKEEGGRHTPFFNNYRPQFYFRTTDVTGIVTLPEGTEMVMPGDNIELAVELIAPIAIEDGTKFSIREGGRTVGAGVVSNISK</sequence>
<name>EFTU_LISMF</name>
<organism>
    <name type="scientific">Listeria monocytogenes serotype 4b (strain F2365)</name>
    <dbReference type="NCBI Taxonomy" id="265669"/>
    <lineage>
        <taxon>Bacteria</taxon>
        <taxon>Bacillati</taxon>
        <taxon>Bacillota</taxon>
        <taxon>Bacilli</taxon>
        <taxon>Bacillales</taxon>
        <taxon>Listeriaceae</taxon>
        <taxon>Listeria</taxon>
    </lineage>
</organism>
<comment type="function">
    <text evidence="2">GTP hydrolase that promotes the GTP-dependent binding of aminoacyl-tRNA to the A-site of ribosomes during protein biosynthesis.</text>
</comment>
<comment type="catalytic activity">
    <reaction evidence="2">
        <text>GTP + H2O = GDP + phosphate + H(+)</text>
        <dbReference type="Rhea" id="RHEA:19669"/>
        <dbReference type="ChEBI" id="CHEBI:15377"/>
        <dbReference type="ChEBI" id="CHEBI:15378"/>
        <dbReference type="ChEBI" id="CHEBI:37565"/>
        <dbReference type="ChEBI" id="CHEBI:43474"/>
        <dbReference type="ChEBI" id="CHEBI:58189"/>
        <dbReference type="EC" id="3.6.5.3"/>
    </reaction>
    <physiologicalReaction direction="left-to-right" evidence="2">
        <dbReference type="Rhea" id="RHEA:19670"/>
    </physiologicalReaction>
</comment>
<comment type="subunit">
    <text evidence="2">Monomer.</text>
</comment>
<comment type="subcellular location">
    <subcellularLocation>
        <location evidence="2">Cytoplasm</location>
    </subcellularLocation>
</comment>
<comment type="PTM">
    <text evidence="1">Phosphorylated on serine and/or threonine residue(s). Dephosphorylated by stp (By similarity).</text>
</comment>
<comment type="similarity">
    <text evidence="2">Belongs to the TRAFAC class translation factor GTPase superfamily. Classic translation factor GTPase family. EF-Tu/EF-1A subfamily.</text>
</comment>
<accession>Q71WB9</accession>
<gene>
    <name evidence="2" type="primary">tuf</name>
    <name type="ordered locus">LMOf2365_2632</name>
</gene>
<keyword id="KW-0963">Cytoplasm</keyword>
<keyword id="KW-0251">Elongation factor</keyword>
<keyword id="KW-0342">GTP-binding</keyword>
<keyword id="KW-0378">Hydrolase</keyword>
<keyword id="KW-0460">Magnesium</keyword>
<keyword id="KW-0479">Metal-binding</keyword>
<keyword id="KW-0547">Nucleotide-binding</keyword>
<keyword id="KW-0597">Phosphoprotein</keyword>
<keyword id="KW-0648">Protein biosynthesis</keyword>
<dbReference type="EC" id="3.6.5.3" evidence="2"/>
<dbReference type="EMBL" id="AE017262">
    <property type="protein sequence ID" value="AAT05397.1"/>
    <property type="molecule type" value="Genomic_DNA"/>
</dbReference>
<dbReference type="RefSeq" id="WP_003723640.1">
    <property type="nucleotide sequence ID" value="NC_002973.6"/>
</dbReference>
<dbReference type="SMR" id="Q71WB9"/>
<dbReference type="GeneID" id="61190526"/>
<dbReference type="KEGG" id="lmf:LMOf2365_2632"/>
<dbReference type="HOGENOM" id="CLU_007265_0_0_9"/>
<dbReference type="GO" id="GO:0005829">
    <property type="term" value="C:cytosol"/>
    <property type="evidence" value="ECO:0007669"/>
    <property type="project" value="TreeGrafter"/>
</dbReference>
<dbReference type="GO" id="GO:0005525">
    <property type="term" value="F:GTP binding"/>
    <property type="evidence" value="ECO:0007669"/>
    <property type="project" value="UniProtKB-UniRule"/>
</dbReference>
<dbReference type="GO" id="GO:0003924">
    <property type="term" value="F:GTPase activity"/>
    <property type="evidence" value="ECO:0007669"/>
    <property type="project" value="InterPro"/>
</dbReference>
<dbReference type="GO" id="GO:0003746">
    <property type="term" value="F:translation elongation factor activity"/>
    <property type="evidence" value="ECO:0007669"/>
    <property type="project" value="UniProtKB-UniRule"/>
</dbReference>
<dbReference type="CDD" id="cd01884">
    <property type="entry name" value="EF_Tu"/>
    <property type="match status" value="1"/>
</dbReference>
<dbReference type="CDD" id="cd03697">
    <property type="entry name" value="EFTU_II"/>
    <property type="match status" value="1"/>
</dbReference>
<dbReference type="CDD" id="cd03707">
    <property type="entry name" value="EFTU_III"/>
    <property type="match status" value="1"/>
</dbReference>
<dbReference type="FunFam" id="2.40.30.10:FF:000001">
    <property type="entry name" value="Elongation factor Tu"/>
    <property type="match status" value="1"/>
</dbReference>
<dbReference type="FunFam" id="3.40.50.300:FF:000003">
    <property type="entry name" value="Elongation factor Tu"/>
    <property type="match status" value="1"/>
</dbReference>
<dbReference type="Gene3D" id="3.40.50.300">
    <property type="entry name" value="P-loop containing nucleotide triphosphate hydrolases"/>
    <property type="match status" value="1"/>
</dbReference>
<dbReference type="Gene3D" id="2.40.30.10">
    <property type="entry name" value="Translation factors"/>
    <property type="match status" value="2"/>
</dbReference>
<dbReference type="HAMAP" id="MF_00118_B">
    <property type="entry name" value="EF_Tu_B"/>
    <property type="match status" value="1"/>
</dbReference>
<dbReference type="InterPro" id="IPR041709">
    <property type="entry name" value="EF-Tu_GTP-bd"/>
</dbReference>
<dbReference type="InterPro" id="IPR050055">
    <property type="entry name" value="EF-Tu_GTPase"/>
</dbReference>
<dbReference type="InterPro" id="IPR004161">
    <property type="entry name" value="EFTu-like_2"/>
</dbReference>
<dbReference type="InterPro" id="IPR033720">
    <property type="entry name" value="EFTU_2"/>
</dbReference>
<dbReference type="InterPro" id="IPR031157">
    <property type="entry name" value="G_TR_CS"/>
</dbReference>
<dbReference type="InterPro" id="IPR027417">
    <property type="entry name" value="P-loop_NTPase"/>
</dbReference>
<dbReference type="InterPro" id="IPR005225">
    <property type="entry name" value="Small_GTP-bd"/>
</dbReference>
<dbReference type="InterPro" id="IPR000795">
    <property type="entry name" value="T_Tr_GTP-bd_dom"/>
</dbReference>
<dbReference type="InterPro" id="IPR009000">
    <property type="entry name" value="Transl_B-barrel_sf"/>
</dbReference>
<dbReference type="InterPro" id="IPR009001">
    <property type="entry name" value="Transl_elong_EF1A/Init_IF2_C"/>
</dbReference>
<dbReference type="InterPro" id="IPR004541">
    <property type="entry name" value="Transl_elong_EFTu/EF1A_bac/org"/>
</dbReference>
<dbReference type="InterPro" id="IPR004160">
    <property type="entry name" value="Transl_elong_EFTu/EF1A_C"/>
</dbReference>
<dbReference type="NCBIfam" id="TIGR00485">
    <property type="entry name" value="EF-Tu"/>
    <property type="match status" value="1"/>
</dbReference>
<dbReference type="NCBIfam" id="NF000766">
    <property type="entry name" value="PRK00049.1"/>
    <property type="match status" value="1"/>
</dbReference>
<dbReference type="NCBIfam" id="NF009372">
    <property type="entry name" value="PRK12735.1"/>
    <property type="match status" value="1"/>
</dbReference>
<dbReference type="NCBIfam" id="NF009373">
    <property type="entry name" value="PRK12736.1"/>
    <property type="match status" value="1"/>
</dbReference>
<dbReference type="NCBIfam" id="TIGR00231">
    <property type="entry name" value="small_GTP"/>
    <property type="match status" value="1"/>
</dbReference>
<dbReference type="PANTHER" id="PTHR43721:SF22">
    <property type="entry name" value="ELONGATION FACTOR TU, MITOCHONDRIAL"/>
    <property type="match status" value="1"/>
</dbReference>
<dbReference type="PANTHER" id="PTHR43721">
    <property type="entry name" value="ELONGATION FACTOR TU-RELATED"/>
    <property type="match status" value="1"/>
</dbReference>
<dbReference type="Pfam" id="PF00009">
    <property type="entry name" value="GTP_EFTU"/>
    <property type="match status" value="1"/>
</dbReference>
<dbReference type="Pfam" id="PF03144">
    <property type="entry name" value="GTP_EFTU_D2"/>
    <property type="match status" value="1"/>
</dbReference>
<dbReference type="Pfam" id="PF03143">
    <property type="entry name" value="GTP_EFTU_D3"/>
    <property type="match status" value="1"/>
</dbReference>
<dbReference type="PRINTS" id="PR00315">
    <property type="entry name" value="ELONGATNFCT"/>
</dbReference>
<dbReference type="SUPFAM" id="SSF50465">
    <property type="entry name" value="EF-Tu/eEF-1alpha/eIF2-gamma C-terminal domain"/>
    <property type="match status" value="1"/>
</dbReference>
<dbReference type="SUPFAM" id="SSF52540">
    <property type="entry name" value="P-loop containing nucleoside triphosphate hydrolases"/>
    <property type="match status" value="1"/>
</dbReference>
<dbReference type="SUPFAM" id="SSF50447">
    <property type="entry name" value="Translation proteins"/>
    <property type="match status" value="1"/>
</dbReference>
<dbReference type="PROSITE" id="PS00301">
    <property type="entry name" value="G_TR_1"/>
    <property type="match status" value="1"/>
</dbReference>
<dbReference type="PROSITE" id="PS51722">
    <property type="entry name" value="G_TR_2"/>
    <property type="match status" value="1"/>
</dbReference>
<reference key="1">
    <citation type="journal article" date="2004" name="Nucleic Acids Res.">
        <title>Whole genome comparisons of serotype 4b and 1/2a strains of the food-borne pathogen Listeria monocytogenes reveal new insights into the core genome components of this species.</title>
        <authorList>
            <person name="Nelson K.E."/>
            <person name="Fouts D.E."/>
            <person name="Mongodin E.F."/>
            <person name="Ravel J."/>
            <person name="DeBoy R.T."/>
            <person name="Kolonay J.F."/>
            <person name="Rasko D.A."/>
            <person name="Angiuoli S.V."/>
            <person name="Gill S.R."/>
            <person name="Paulsen I.T."/>
            <person name="Peterson J.D."/>
            <person name="White O."/>
            <person name="Nelson W.C."/>
            <person name="Nierman W.C."/>
            <person name="Beanan M.J."/>
            <person name="Brinkac L.M."/>
            <person name="Daugherty S.C."/>
            <person name="Dodson R.J."/>
            <person name="Durkin A.S."/>
            <person name="Madupu R."/>
            <person name="Haft D.H."/>
            <person name="Selengut J."/>
            <person name="Van Aken S.E."/>
            <person name="Khouri H.M."/>
            <person name="Fedorova N."/>
            <person name="Forberger H.A."/>
            <person name="Tran B."/>
            <person name="Kathariou S."/>
            <person name="Wonderling L.D."/>
            <person name="Uhlich G.A."/>
            <person name="Bayles D.O."/>
            <person name="Luchansky J.B."/>
            <person name="Fraser C.M."/>
        </authorList>
    </citation>
    <scope>NUCLEOTIDE SEQUENCE [LARGE SCALE GENOMIC DNA]</scope>
    <source>
        <strain>F2365</strain>
    </source>
</reference>
<feature type="chain" id="PRO_0000091342" description="Elongation factor Tu">
    <location>
        <begin position="1"/>
        <end position="395"/>
    </location>
</feature>
<feature type="domain" description="tr-type G">
    <location>
        <begin position="10"/>
        <end position="204"/>
    </location>
</feature>
<feature type="region of interest" description="G1" evidence="1">
    <location>
        <begin position="19"/>
        <end position="26"/>
    </location>
</feature>
<feature type="region of interest" description="G2" evidence="1">
    <location>
        <begin position="60"/>
        <end position="64"/>
    </location>
</feature>
<feature type="region of interest" description="G3" evidence="1">
    <location>
        <begin position="81"/>
        <end position="84"/>
    </location>
</feature>
<feature type="region of interest" description="G4" evidence="1">
    <location>
        <begin position="136"/>
        <end position="139"/>
    </location>
</feature>
<feature type="region of interest" description="G5" evidence="1">
    <location>
        <begin position="174"/>
        <end position="176"/>
    </location>
</feature>
<feature type="binding site" evidence="2">
    <location>
        <begin position="19"/>
        <end position="26"/>
    </location>
    <ligand>
        <name>GTP</name>
        <dbReference type="ChEBI" id="CHEBI:37565"/>
    </ligand>
</feature>
<feature type="binding site" evidence="2">
    <location>
        <position position="26"/>
    </location>
    <ligand>
        <name>Mg(2+)</name>
        <dbReference type="ChEBI" id="CHEBI:18420"/>
    </ligand>
</feature>
<feature type="binding site" evidence="2">
    <location>
        <begin position="81"/>
        <end position="85"/>
    </location>
    <ligand>
        <name>GTP</name>
        <dbReference type="ChEBI" id="CHEBI:37565"/>
    </ligand>
</feature>
<feature type="binding site" evidence="2">
    <location>
        <begin position="136"/>
        <end position="139"/>
    </location>
    <ligand>
        <name>GTP</name>
        <dbReference type="ChEBI" id="CHEBI:37565"/>
    </ligand>
</feature>
<protein>
    <recommendedName>
        <fullName evidence="2">Elongation factor Tu</fullName>
        <shortName evidence="2">EF-Tu</shortName>
        <ecNumber evidence="2">3.6.5.3</ecNumber>
    </recommendedName>
</protein>
<evidence type="ECO:0000250" key="1"/>
<evidence type="ECO:0000255" key="2">
    <source>
        <dbReference type="HAMAP-Rule" id="MF_00118"/>
    </source>
</evidence>
<proteinExistence type="inferred from homology"/>